<proteinExistence type="evidence at transcript level"/>
<reference key="1">
    <citation type="submission" date="1997-09" db="EMBL/GenBank/DDBJ databases">
        <authorList>
            <person name="Madigou T."/>
            <person name="Tiffoche C."/>
            <person name="le Gal F."/>
            <person name="Pelletier J."/>
            <person name="Thieulant M."/>
        </authorList>
    </citation>
    <scope>NUCLEOTIDE SEQUENCE [MRNA]</scope>
    <source>
        <strain>Romanov</strain>
        <tissue>Uterus</tissue>
    </source>
</reference>
<keyword id="KW-0238">DNA-binding</keyword>
<keyword id="KW-0446">Lipid-binding</keyword>
<keyword id="KW-0449">Lipoprotein</keyword>
<keyword id="KW-0479">Metal-binding</keyword>
<keyword id="KW-0539">Nucleus</keyword>
<keyword id="KW-0564">Palmitate</keyword>
<keyword id="KW-0597">Phosphoprotein</keyword>
<keyword id="KW-0675">Receptor</keyword>
<keyword id="KW-1185">Reference proteome</keyword>
<keyword id="KW-0754">Steroid-binding</keyword>
<keyword id="KW-0804">Transcription</keyword>
<keyword id="KW-0805">Transcription regulation</keyword>
<keyword id="KW-0862">Zinc</keyword>
<keyword id="KW-0863">Zinc-finger</keyword>
<gene>
    <name type="primary">PGR</name>
    <name type="synonym">NR3C3</name>
</gene>
<name>PRGR_SHEEP</name>
<comment type="function">
    <text evidence="2">The steroid hormones and their receptors are involved in the regulation of eukaryotic gene expression and affect cellular proliferation and differentiation in target tissues. Transcriptional activator of several progesteron-dependent promoters in a variety of cell types. Involved in activation of SRC-dependent MAPK signaling on hormone stimulation.</text>
</comment>
<comment type="subunit">
    <text evidence="2 3">Interacts with CUEDC2, SMARD1 and with UNC45A. Interacts with PRMT2. Interacts with NCOA2 and NCOA1. Interacts with KLF9. Interacts with GTF2B (By similarity).</text>
</comment>
<comment type="subcellular location">
    <subcellularLocation>
        <location>Nucleus</location>
    </subcellularLocation>
</comment>
<comment type="domain">
    <text>Composed of three domains: a modulating N-terminal domain, a DNA-binding domain and a C-terminal ligand-binding domain.</text>
</comment>
<comment type="PTM">
    <text evidence="1">Palmitoylated by ZDHHC7 and ZDHHC21. Palmitoylation is required for plasma membrane targeting and for rapid intracellular signaling via ERK and AKT kinases and cAMP generation (By similarity).</text>
</comment>
<comment type="similarity">
    <text evidence="6">Belongs to the nuclear hormone receptor family. NR3 subfamily.</text>
</comment>
<protein>
    <recommendedName>
        <fullName>Progesterone receptor</fullName>
        <shortName>PR</shortName>
    </recommendedName>
    <alternativeName>
        <fullName>Nuclear receptor subfamily 3 group C member 3</fullName>
    </alternativeName>
</protein>
<evidence type="ECO:0000250" key="1"/>
<evidence type="ECO:0000250" key="2">
    <source>
        <dbReference type="UniProtKB" id="P06401"/>
    </source>
</evidence>
<evidence type="ECO:0000250" key="3">
    <source>
        <dbReference type="UniProtKB" id="Q00175"/>
    </source>
</evidence>
<evidence type="ECO:0000255" key="4">
    <source>
        <dbReference type="PROSITE-ProRule" id="PRU00407"/>
    </source>
</evidence>
<evidence type="ECO:0000255" key="5">
    <source>
        <dbReference type="PROSITE-ProRule" id="PRU01189"/>
    </source>
</evidence>
<evidence type="ECO:0000305" key="6"/>
<accession>Q28590</accession>
<feature type="chain" id="PRO_0000053698" description="Progesterone receptor">
    <location>
        <begin position="1" status="less than"/>
        <end position="377" status="greater than"/>
    </location>
</feature>
<feature type="domain" description="NR LBD" evidence="5">
    <location>
        <begin position="130"/>
        <end position="364"/>
    </location>
</feature>
<feature type="DNA-binding region" description="Nuclear receptor" evidence="4">
    <location>
        <begin position="16"/>
        <end position="90"/>
    </location>
</feature>
<feature type="zinc finger region" description="NR C4-type" evidence="4">
    <location>
        <begin position="18"/>
        <end position="38"/>
    </location>
</feature>
<feature type="zinc finger region" description="NR C4-type" evidence="4">
    <location>
        <begin position="54"/>
        <end position="78"/>
    </location>
</feature>
<feature type="region of interest" description="Modulating, Pro-Rich">
    <location>
        <begin position="1" status="less than"/>
        <end position="15"/>
    </location>
</feature>
<feature type="region of interest" description="AF2; mediates transcriptional activation" evidence="2">
    <location>
        <begin position="138"/>
        <end position="377" status="greater than"/>
    </location>
</feature>
<feature type="modified residue" description="Phosphoserine" evidence="2">
    <location>
        <position position="127"/>
    </location>
</feature>
<feature type="non-terminal residue">
    <location>
        <position position="1"/>
    </location>
</feature>
<feature type="non-terminal residue">
    <location>
        <position position="377"/>
    </location>
</feature>
<dbReference type="EMBL" id="Z66555">
    <property type="protein sequence ID" value="CAA91447.1"/>
    <property type="molecule type" value="mRNA"/>
</dbReference>
<dbReference type="SMR" id="Q28590"/>
<dbReference type="STRING" id="9940.ENSOARP00000008411"/>
<dbReference type="ChEMBL" id="CHEMBL3271928"/>
<dbReference type="PaxDb" id="9940-ENSOARP00000008411"/>
<dbReference type="eggNOG" id="KOG3575">
    <property type="taxonomic scope" value="Eukaryota"/>
</dbReference>
<dbReference type="Proteomes" id="UP000002356">
    <property type="component" value="Unplaced"/>
</dbReference>
<dbReference type="GO" id="GO:0005634">
    <property type="term" value="C:nucleus"/>
    <property type="evidence" value="ECO:0007669"/>
    <property type="project" value="UniProtKB-SubCell"/>
</dbReference>
<dbReference type="GO" id="GO:0003700">
    <property type="term" value="F:DNA-binding transcription factor activity"/>
    <property type="evidence" value="ECO:0007669"/>
    <property type="project" value="InterPro"/>
</dbReference>
<dbReference type="GO" id="GO:0043565">
    <property type="term" value="F:sequence-specific DNA binding"/>
    <property type="evidence" value="ECO:0007669"/>
    <property type="project" value="InterPro"/>
</dbReference>
<dbReference type="GO" id="GO:0005496">
    <property type="term" value="F:steroid binding"/>
    <property type="evidence" value="ECO:0007669"/>
    <property type="project" value="UniProtKB-KW"/>
</dbReference>
<dbReference type="GO" id="GO:0008270">
    <property type="term" value="F:zinc ion binding"/>
    <property type="evidence" value="ECO:0007669"/>
    <property type="project" value="UniProtKB-KW"/>
</dbReference>
<dbReference type="CDD" id="cd07172">
    <property type="entry name" value="NR_DBD_GR_PR"/>
    <property type="match status" value="1"/>
</dbReference>
<dbReference type="FunFam" id="1.10.565.10:FF:000004">
    <property type="entry name" value="Androgen receptor variant"/>
    <property type="match status" value="1"/>
</dbReference>
<dbReference type="FunFam" id="3.30.50.10:FF:000027">
    <property type="entry name" value="Progesterone receptor"/>
    <property type="match status" value="1"/>
</dbReference>
<dbReference type="Gene3D" id="3.30.50.10">
    <property type="entry name" value="Erythroid Transcription Factor GATA-1, subunit A"/>
    <property type="match status" value="1"/>
</dbReference>
<dbReference type="Gene3D" id="1.10.565.10">
    <property type="entry name" value="Retinoid X Receptor"/>
    <property type="match status" value="1"/>
</dbReference>
<dbReference type="InterPro" id="IPR035500">
    <property type="entry name" value="NHR-like_dom_sf"/>
</dbReference>
<dbReference type="InterPro" id="IPR000536">
    <property type="entry name" value="Nucl_hrmn_rcpt_lig-bd"/>
</dbReference>
<dbReference type="InterPro" id="IPR050200">
    <property type="entry name" value="Nuclear_hormone_rcpt_NR3"/>
</dbReference>
<dbReference type="InterPro" id="IPR001723">
    <property type="entry name" value="Nuclear_hrmn_rcpt"/>
</dbReference>
<dbReference type="InterPro" id="IPR001628">
    <property type="entry name" value="Znf_hrmn_rcpt"/>
</dbReference>
<dbReference type="InterPro" id="IPR013088">
    <property type="entry name" value="Znf_NHR/GATA"/>
</dbReference>
<dbReference type="PANTHER" id="PTHR48092">
    <property type="entry name" value="KNIRPS-RELATED PROTEIN-RELATED"/>
    <property type="match status" value="1"/>
</dbReference>
<dbReference type="Pfam" id="PF00104">
    <property type="entry name" value="Hormone_recep"/>
    <property type="match status" value="1"/>
</dbReference>
<dbReference type="Pfam" id="PF00105">
    <property type="entry name" value="zf-C4"/>
    <property type="match status" value="1"/>
</dbReference>
<dbReference type="PRINTS" id="PR00398">
    <property type="entry name" value="STRDHORMONER"/>
</dbReference>
<dbReference type="PRINTS" id="PR00047">
    <property type="entry name" value="STROIDFINGER"/>
</dbReference>
<dbReference type="SMART" id="SM00430">
    <property type="entry name" value="HOLI"/>
    <property type="match status" value="1"/>
</dbReference>
<dbReference type="SMART" id="SM00399">
    <property type="entry name" value="ZnF_C4"/>
    <property type="match status" value="1"/>
</dbReference>
<dbReference type="SUPFAM" id="SSF57716">
    <property type="entry name" value="Glucocorticoid receptor-like (DNA-binding domain)"/>
    <property type="match status" value="1"/>
</dbReference>
<dbReference type="SUPFAM" id="SSF48508">
    <property type="entry name" value="Nuclear receptor ligand-binding domain"/>
    <property type="match status" value="1"/>
</dbReference>
<dbReference type="PROSITE" id="PS51843">
    <property type="entry name" value="NR_LBD"/>
    <property type="match status" value="1"/>
</dbReference>
<dbReference type="PROSITE" id="PS00031">
    <property type="entry name" value="NUCLEAR_REC_DBD_1"/>
    <property type="match status" value="1"/>
</dbReference>
<dbReference type="PROSITE" id="PS51030">
    <property type="entry name" value="NUCLEAR_REC_DBD_2"/>
    <property type="match status" value="1"/>
</dbReference>
<organism>
    <name type="scientific">Ovis aries</name>
    <name type="common">Sheep</name>
    <dbReference type="NCBI Taxonomy" id="9940"/>
    <lineage>
        <taxon>Eukaryota</taxon>
        <taxon>Metazoa</taxon>
        <taxon>Chordata</taxon>
        <taxon>Craniata</taxon>
        <taxon>Vertebrata</taxon>
        <taxon>Euteleostomi</taxon>
        <taxon>Mammalia</taxon>
        <taxon>Eutheria</taxon>
        <taxon>Laurasiatheria</taxon>
        <taxon>Artiodactyla</taxon>
        <taxon>Ruminantia</taxon>
        <taxon>Pecora</taxon>
        <taxon>Bovidae</taxon>
        <taxon>Caprinae</taxon>
        <taxon>Ovis</taxon>
    </lineage>
</organism>
<sequence length="377" mass="42904">EASQSPQYSFESLPQKICLICGDEASGCHYGVLTCGSCKVFFKRAMEGQHNYLCAGRNDCIVDKIRRKNCPACRLRKCCQAGMVLGGRKFKKFNKVRVMRTLDAVALPQPVGIPNESQALSQRITFSPSQDLQLIPPLINLLMSIEPDMVYAGHDNSKPDTSSSLLTSLNQLGERQLLSVVKWSKSLPGFRNLHIDDQITLIQYSWMSLMVFGLGWRSYKHVSGQMLYFAPDLILNEQRMKESSFYSLCLTMWQIPQEFVKLQVSQEEFLCMKVLLLLNTIPLEGLRSQNQFEEMRSSYIRELIKAIGLRQKGVVPSSQRFYQLTKLLDNLHDLVKQLHLYCLNTFIQSRALSVEFPEMMSEVIAAQLPKILAGMVK</sequence>